<evidence type="ECO:0000256" key="1">
    <source>
        <dbReference type="SAM" id="MobiDB-lite"/>
    </source>
</evidence>
<evidence type="ECO:0000269" key="2">
    <source>
    </source>
</evidence>
<evidence type="ECO:0000269" key="3">
    <source>
    </source>
</evidence>
<evidence type="ECO:0000269" key="4">
    <source>
    </source>
</evidence>
<evidence type="ECO:0000269" key="5">
    <source>
    </source>
</evidence>
<evidence type="ECO:0000269" key="6">
    <source>
    </source>
</evidence>
<evidence type="ECO:0000305" key="7"/>
<evidence type="ECO:0007744" key="8">
    <source>
        <dbReference type="PDB" id="5JW7"/>
    </source>
</evidence>
<evidence type="ECO:0007829" key="9">
    <source>
        <dbReference type="PDB" id="2QYU"/>
    </source>
</evidence>
<evidence type="ECO:0007829" key="10">
    <source>
        <dbReference type="PDB" id="2QZA"/>
    </source>
</evidence>
<evidence type="ECO:0007829" key="11">
    <source>
        <dbReference type="PDB" id="3SY2"/>
    </source>
</evidence>
<evidence type="ECO:0007829" key="12">
    <source>
        <dbReference type="PDB" id="5JW7"/>
    </source>
</evidence>
<evidence type="ECO:0007829" key="13">
    <source>
        <dbReference type="PDB" id="8ST8"/>
    </source>
</evidence>
<dbReference type="EC" id="2.3.2.26" evidence="6"/>
<dbReference type="EMBL" id="AE006468">
    <property type="protein sequence ID" value="AAL20970.1"/>
    <property type="molecule type" value="Genomic_DNA"/>
</dbReference>
<dbReference type="RefSeq" id="NP_461011.1">
    <property type="nucleotide sequence ID" value="NC_003197.2"/>
</dbReference>
<dbReference type="RefSeq" id="WP_000703998.1">
    <property type="nucleotide sequence ID" value="NC_003197.2"/>
</dbReference>
<dbReference type="PDB" id="2QYU">
    <property type="method" value="X-ray"/>
    <property type="resolution" value="2.10 A"/>
    <property type="chains" value="A=163-782"/>
</dbReference>
<dbReference type="PDB" id="2QZA">
    <property type="method" value="X-ray"/>
    <property type="resolution" value="2.80 A"/>
    <property type="chains" value="A/B=165-782"/>
</dbReference>
<dbReference type="PDB" id="3SY2">
    <property type="method" value="X-ray"/>
    <property type="resolution" value="3.27 A"/>
    <property type="chains" value="A/B=165-782"/>
</dbReference>
<dbReference type="PDB" id="5JW7">
    <property type="method" value="X-ray"/>
    <property type="resolution" value="2.85 A"/>
    <property type="chains" value="A=163-425"/>
</dbReference>
<dbReference type="PDB" id="8ST8">
    <property type="method" value="X-ray"/>
    <property type="resolution" value="1.75 A"/>
    <property type="chains" value="A=603-782"/>
</dbReference>
<dbReference type="PDBsum" id="2QYU"/>
<dbReference type="PDBsum" id="2QZA"/>
<dbReference type="PDBsum" id="3SY2"/>
<dbReference type="PDBsum" id="5JW7"/>
<dbReference type="PDBsum" id="8ST8"/>
<dbReference type="SMR" id="Q8ZNR3"/>
<dbReference type="DIP" id="DIP-46397N"/>
<dbReference type="IntAct" id="Q8ZNR3">
    <property type="interactions" value="1"/>
</dbReference>
<dbReference type="STRING" id="99287.STM2066"/>
<dbReference type="PaxDb" id="99287-STM2066"/>
<dbReference type="GeneID" id="1253587"/>
<dbReference type="KEGG" id="stm:STM2066"/>
<dbReference type="PATRIC" id="fig|99287.12.peg.2188"/>
<dbReference type="HOGENOM" id="CLU_026158_0_0_6"/>
<dbReference type="OMA" id="SEWIRPV"/>
<dbReference type="PhylomeDB" id="Q8ZNR3"/>
<dbReference type="BioCyc" id="SENT99287:STM2066-MONOMER"/>
<dbReference type="EvolutionaryTrace" id="Q8ZNR3"/>
<dbReference type="PHI-base" id="PHI:7919"/>
<dbReference type="Proteomes" id="UP000001014">
    <property type="component" value="Chromosome"/>
</dbReference>
<dbReference type="GO" id="GO:0005576">
    <property type="term" value="C:extracellular region"/>
    <property type="evidence" value="ECO:0000250"/>
    <property type="project" value="UniProtKB"/>
</dbReference>
<dbReference type="GO" id="GO:0043657">
    <property type="term" value="C:host cell"/>
    <property type="evidence" value="ECO:0007669"/>
    <property type="project" value="UniProtKB-SubCell"/>
</dbReference>
<dbReference type="GO" id="GO:0004842">
    <property type="term" value="F:ubiquitin-protein transferase activity"/>
    <property type="evidence" value="ECO:0000314"/>
    <property type="project" value="UniProtKB"/>
</dbReference>
<dbReference type="GO" id="GO:0016567">
    <property type="term" value="P:protein ubiquitination"/>
    <property type="evidence" value="ECO:0000314"/>
    <property type="project" value="UniProtKB"/>
</dbReference>
<dbReference type="FunFam" id="1.25.40.300:FF:000001">
    <property type="entry name" value="SPI-1 type III secretion system effector HECT-type E3 ubiquitin transferase SopA"/>
    <property type="match status" value="1"/>
</dbReference>
<dbReference type="FunFam" id="2.160.20.80:FF:000005">
    <property type="entry name" value="SPI-1 type III secretion system effector HECT-type E3 ubiquitin transferase SopA"/>
    <property type="match status" value="1"/>
</dbReference>
<dbReference type="Gene3D" id="2.160.20.80">
    <property type="entry name" value="E3 ubiquitin-protein ligase SopA"/>
    <property type="match status" value="1"/>
</dbReference>
<dbReference type="Gene3D" id="1.10.4140.10">
    <property type="entry name" value="effector protein (NleL)"/>
    <property type="match status" value="1"/>
</dbReference>
<dbReference type="Gene3D" id="3.40.1850.10">
    <property type="entry name" value="HECT-like ubiquitin ligase"/>
    <property type="match status" value="1"/>
</dbReference>
<dbReference type="Gene3D" id="1.25.40.300">
    <property type="entry name" value="Putative secreted effector protein"/>
    <property type="match status" value="1"/>
</dbReference>
<dbReference type="InterPro" id="IPR025725">
    <property type="entry name" value="SopA-like_cat"/>
</dbReference>
<dbReference type="InterPro" id="IPR038270">
    <property type="entry name" value="SopA-like_catalytic_sf"/>
</dbReference>
<dbReference type="InterPro" id="IPR025726">
    <property type="entry name" value="SopA-like_central"/>
</dbReference>
<dbReference type="NCBIfam" id="NF011904">
    <property type="entry name" value="PRK15377.1"/>
    <property type="match status" value="1"/>
</dbReference>
<dbReference type="Pfam" id="PF13981">
    <property type="entry name" value="SopA"/>
    <property type="match status" value="1"/>
</dbReference>
<dbReference type="Pfam" id="PF13979">
    <property type="entry name" value="SopA_C"/>
    <property type="match status" value="1"/>
</dbReference>
<dbReference type="SUPFAM" id="SSF141571">
    <property type="entry name" value="Pentapeptide repeat-like"/>
    <property type="match status" value="1"/>
</dbReference>
<comment type="function">
    <text evidence="4 5">Effector proteins function to alter host cell physiology and promote bacterial survival in host tissues. This protein is an E3 ubiquitin ligase that interferes with host's ubiquitination pathway (PubMed:28084320). For instance, prevents host innate immune response by ubiquitinating and thus sending to degradation host E3 ubiquitin ligases TRIM56 and TRIM65 (PubMed:28084320). Required for inducing polymorphonuclear leukocytes migration across the intestinal epithelium. Preferentially uses host UBE2D1 (UBCH5A), UBE2D2 (UBCH5B) and UBE2L3 (UBCH7) as E2 ubiquitin-conjugating enzymes.</text>
</comment>
<comment type="catalytic activity">
    <reaction evidence="6">
        <text>S-ubiquitinyl-[E2 ubiquitin-conjugating enzyme]-L-cysteine + [acceptor protein]-L-lysine = [E2 ubiquitin-conjugating enzyme]-L-cysteine + N(6)-ubiquitinyl-[acceptor protein]-L-lysine.</text>
        <dbReference type="EC" id="2.3.2.26"/>
    </reaction>
</comment>
<comment type="subunit">
    <text evidence="2 3">Interacts with SpaK/InvB.</text>
</comment>
<comment type="interaction">
    <interactant intactId="EBI-15674008">
        <id>Q8ZNR3</id>
    </interactant>
    <interactant intactId="EBI-15556257">
        <id>P68036-1</id>
        <label>UBE2L3</label>
    </interactant>
    <organismsDiffer>true</organismsDiffer>
    <experiments>2</experiments>
</comment>
<comment type="subcellular location">
    <subcellularLocation>
        <location evidence="3">Secreted</location>
    </subcellularLocation>
    <subcellularLocation>
        <location evidence="3">Host cell</location>
    </subcellularLocation>
    <text evidence="3">Secreted via type III secretion system 1 (SPI-1 T3SS), and delivered into the host cell. Can also be secreted through the flagellar export apparatus.</text>
</comment>
<comment type="domain">
    <text evidence="3 5">The N-terminal 45 amino acids are necessary and sufficient for secretion and translocation into host cells. This N-terminal region binds the SpaK/InvB chaperone. Contains a C-terminal HECT-like domain.</text>
</comment>
<comment type="PTM">
    <text evidence="4">Ubiquitinated in the presence of host E1 ubiquitin-activating enzyme, E2 ubiquitin-conjugating enzyme and ubiquitin.</text>
</comment>
<comment type="miscellaneous">
    <text>Requires SpaK/InvB as a chaperone for its stability and for secretion.</text>
</comment>
<comment type="similarity">
    <text evidence="7">Belongs to the SopA E3 ligase family.</text>
</comment>
<feature type="chain" id="PRO_0000395847" description="E3 ubiquitin-protein ligase SopA">
    <location>
        <begin position="1"/>
        <end position="782"/>
    </location>
</feature>
<feature type="region of interest" description="Disordered" evidence="1">
    <location>
        <begin position="137"/>
        <end position="171"/>
    </location>
</feature>
<feature type="compositionally biased region" description="Low complexity" evidence="1">
    <location>
        <begin position="157"/>
        <end position="171"/>
    </location>
</feature>
<feature type="active site" description="Glycyl thioester intermediate" evidence="7">
    <location>
        <position position="753"/>
    </location>
</feature>
<feature type="mutagenesis site" description="Slight decrease in activity." evidence="5">
    <original>L</original>
    <variation>A</variation>
    <location>
        <position position="747"/>
    </location>
</feature>
<feature type="mutagenesis site" description="Strong decrease in activity." evidence="5">
    <original>T</original>
    <variation>A</variation>
    <location>
        <position position="752"/>
    </location>
</feature>
<feature type="mutagenesis site" description="Loss of ubiquitin ligase activity. No thioester formation." evidence="4">
    <original>C</original>
    <variation>S</variation>
    <location>
        <position position="753"/>
    </location>
</feature>
<feature type="helix" evidence="9">
    <location>
        <begin position="170"/>
        <end position="185"/>
    </location>
</feature>
<feature type="turn" evidence="9">
    <location>
        <begin position="192"/>
        <end position="195"/>
    </location>
</feature>
<feature type="helix" evidence="9">
    <location>
        <begin position="207"/>
        <end position="209"/>
    </location>
</feature>
<feature type="helix" evidence="9">
    <location>
        <begin position="213"/>
        <end position="216"/>
    </location>
</feature>
<feature type="strand" evidence="10">
    <location>
        <begin position="217"/>
        <end position="219"/>
    </location>
</feature>
<feature type="strand" evidence="9">
    <location>
        <begin position="223"/>
        <end position="225"/>
    </location>
</feature>
<feature type="strand" evidence="9">
    <location>
        <begin position="242"/>
        <end position="245"/>
    </location>
</feature>
<feature type="strand" evidence="9">
    <location>
        <begin position="262"/>
        <end position="265"/>
    </location>
</feature>
<feature type="strand" evidence="9">
    <location>
        <begin position="284"/>
        <end position="289"/>
    </location>
</feature>
<feature type="strand" evidence="9">
    <location>
        <begin position="300"/>
        <end position="305"/>
    </location>
</feature>
<feature type="strand" evidence="12">
    <location>
        <begin position="318"/>
        <end position="320"/>
    </location>
</feature>
<feature type="strand" evidence="9">
    <location>
        <begin position="323"/>
        <end position="326"/>
    </location>
</feature>
<feature type="strand" evidence="9">
    <location>
        <begin position="329"/>
        <end position="332"/>
    </location>
</feature>
<feature type="helix" evidence="9">
    <location>
        <begin position="339"/>
        <end position="346"/>
    </location>
</feature>
<feature type="turn" evidence="9">
    <location>
        <begin position="349"/>
        <end position="353"/>
    </location>
</feature>
<feature type="helix" evidence="9">
    <location>
        <begin position="356"/>
        <end position="361"/>
    </location>
</feature>
<feature type="helix" evidence="9">
    <location>
        <begin position="365"/>
        <end position="367"/>
    </location>
</feature>
<feature type="helix" evidence="9">
    <location>
        <begin position="368"/>
        <end position="383"/>
    </location>
</feature>
<feature type="helix" evidence="9">
    <location>
        <begin position="389"/>
        <end position="392"/>
    </location>
</feature>
<feature type="helix" evidence="9">
    <location>
        <begin position="393"/>
        <end position="395"/>
    </location>
</feature>
<feature type="helix" evidence="9">
    <location>
        <begin position="396"/>
        <end position="403"/>
    </location>
</feature>
<feature type="helix" evidence="9">
    <location>
        <begin position="408"/>
        <end position="410"/>
    </location>
</feature>
<feature type="helix" evidence="9">
    <location>
        <begin position="412"/>
        <end position="433"/>
    </location>
</feature>
<feature type="strand" evidence="9">
    <location>
        <begin position="434"/>
        <end position="436"/>
    </location>
</feature>
<feature type="helix" evidence="9">
    <location>
        <begin position="443"/>
        <end position="448"/>
    </location>
</feature>
<feature type="helix" evidence="9">
    <location>
        <begin position="450"/>
        <end position="459"/>
    </location>
</feature>
<feature type="helix" evidence="9">
    <location>
        <begin position="463"/>
        <end position="466"/>
    </location>
</feature>
<feature type="helix" evidence="9">
    <location>
        <begin position="468"/>
        <end position="480"/>
    </location>
</feature>
<feature type="helix" evidence="9">
    <location>
        <begin position="486"/>
        <end position="501"/>
    </location>
</feature>
<feature type="turn" evidence="9">
    <location>
        <begin position="503"/>
        <end position="505"/>
    </location>
</feature>
<feature type="helix" evidence="9">
    <location>
        <begin position="506"/>
        <end position="508"/>
    </location>
</feature>
<feature type="turn" evidence="9">
    <location>
        <begin position="511"/>
        <end position="513"/>
    </location>
</feature>
<feature type="strand" evidence="9">
    <location>
        <begin position="517"/>
        <end position="520"/>
    </location>
</feature>
<feature type="strand" evidence="9">
    <location>
        <begin position="526"/>
        <end position="528"/>
    </location>
</feature>
<feature type="strand" evidence="9">
    <location>
        <begin position="531"/>
        <end position="534"/>
    </location>
</feature>
<feature type="strand" evidence="9">
    <location>
        <begin position="541"/>
        <end position="545"/>
    </location>
</feature>
<feature type="helix" evidence="9">
    <location>
        <begin position="547"/>
        <end position="554"/>
    </location>
</feature>
<feature type="strand" evidence="9">
    <location>
        <begin position="565"/>
        <end position="569"/>
    </location>
</feature>
<feature type="strand" evidence="9">
    <location>
        <begin position="572"/>
        <end position="574"/>
    </location>
</feature>
<feature type="helix" evidence="9">
    <location>
        <begin position="581"/>
        <end position="588"/>
    </location>
</feature>
<feature type="helix" evidence="11">
    <location>
        <begin position="590"/>
        <end position="592"/>
    </location>
</feature>
<feature type="helix" evidence="11">
    <location>
        <begin position="593"/>
        <end position="596"/>
    </location>
</feature>
<feature type="helix" evidence="13">
    <location>
        <begin position="603"/>
        <end position="612"/>
    </location>
</feature>
<feature type="turn" evidence="13">
    <location>
        <begin position="615"/>
        <end position="617"/>
    </location>
</feature>
<feature type="helix" evidence="13">
    <location>
        <begin position="619"/>
        <end position="628"/>
    </location>
</feature>
<feature type="helix" evidence="13">
    <location>
        <begin position="641"/>
        <end position="651"/>
    </location>
</feature>
<feature type="helix" evidence="13">
    <location>
        <begin position="652"/>
        <end position="654"/>
    </location>
</feature>
<feature type="helix" evidence="13">
    <location>
        <begin position="656"/>
        <end position="658"/>
    </location>
</feature>
<feature type="helix" evidence="13">
    <location>
        <begin position="662"/>
        <end position="671"/>
    </location>
</feature>
<feature type="strand" evidence="10">
    <location>
        <begin position="675"/>
        <end position="677"/>
    </location>
</feature>
<feature type="helix" evidence="13">
    <location>
        <begin position="679"/>
        <end position="697"/>
    </location>
</feature>
<feature type="turn" evidence="13">
    <location>
        <begin position="699"/>
        <end position="702"/>
    </location>
</feature>
<feature type="helix" evidence="13">
    <location>
        <begin position="710"/>
        <end position="726"/>
    </location>
</feature>
<feature type="helix" evidence="13">
    <location>
        <begin position="728"/>
        <end position="730"/>
    </location>
</feature>
<feature type="helix" evidence="13">
    <location>
        <begin position="734"/>
        <end position="745"/>
    </location>
</feature>
<feature type="helix" evidence="13">
    <location>
        <begin position="754"/>
        <end position="768"/>
    </location>
</feature>
<feature type="helix" evidence="13">
    <location>
        <begin position="770"/>
        <end position="776"/>
    </location>
</feature>
<feature type="helix" evidence="13">
    <location>
        <begin position="779"/>
        <end position="781"/>
    </location>
</feature>
<proteinExistence type="evidence at protein level"/>
<organism>
    <name type="scientific">Salmonella typhimurium (strain LT2 / SGSC1412 / ATCC 700720)</name>
    <dbReference type="NCBI Taxonomy" id="99287"/>
    <lineage>
        <taxon>Bacteria</taxon>
        <taxon>Pseudomonadati</taxon>
        <taxon>Pseudomonadota</taxon>
        <taxon>Gammaproteobacteria</taxon>
        <taxon>Enterobacterales</taxon>
        <taxon>Enterobacteriaceae</taxon>
        <taxon>Salmonella</taxon>
    </lineage>
</organism>
<reference key="1">
    <citation type="journal article" date="2001" name="Nature">
        <title>Complete genome sequence of Salmonella enterica serovar Typhimurium LT2.</title>
        <authorList>
            <person name="McClelland M."/>
            <person name="Sanderson K.E."/>
            <person name="Spieth J."/>
            <person name="Clifton S.W."/>
            <person name="Latreille P."/>
            <person name="Courtney L."/>
            <person name="Porwollik S."/>
            <person name="Ali J."/>
            <person name="Dante M."/>
            <person name="Du F."/>
            <person name="Hou S."/>
            <person name="Layman D."/>
            <person name="Leonard S."/>
            <person name="Nguyen C."/>
            <person name="Scott K."/>
            <person name="Holmes A."/>
            <person name="Grewal N."/>
            <person name="Mulvaney E."/>
            <person name="Ryan E."/>
            <person name="Sun H."/>
            <person name="Florea L."/>
            <person name="Miller W."/>
            <person name="Stoneking T."/>
            <person name="Nhan M."/>
            <person name="Waterston R."/>
            <person name="Wilson R.K."/>
        </authorList>
    </citation>
    <scope>NUCLEOTIDE SEQUENCE [LARGE SCALE GENOMIC DNA]</scope>
    <source>
        <strain>LT2 / SGSC1412 / ATCC 700720</strain>
    </source>
</reference>
<reference key="2">
    <citation type="journal article" date="2004" name="J. Bacteriol.">
        <title>InvB is required for type III-dependent secretion of SopA in Salmonella enterica serovar Typhimurium.</title>
        <authorList>
            <person name="Ehrbar K."/>
            <person name="Hapfelmeier S."/>
            <person name="Stecher B."/>
            <person name="Hardt W.D."/>
        </authorList>
    </citation>
    <scope>INTERACTION WITH SPAK/INVB</scope>
    <source>
        <strain>SL1344</strain>
    </source>
</reference>
<reference key="3">
    <citation type="journal article" date="2006" name="J. Bacteriol.">
        <title>The first 45 amino acids of SopA are necessary for InvB binding and SPI-1 secretion.</title>
        <authorList>
            <person name="Higashide W."/>
            <person name="Zhou D."/>
        </authorList>
    </citation>
    <scope>INTERACTION WITH SPAK/INVB</scope>
    <scope>SUBCELLULAR LOCATION</scope>
    <scope>DOMAIN</scope>
    <source>
        <strain>SL1344</strain>
    </source>
</reference>
<reference key="4">
    <citation type="journal article" date="2006" name="Mol. Microbiol.">
        <title>The inflammation-associated Salmonella SopA is a HECT-like E3 ubiquitin ligase.</title>
        <authorList>
            <person name="Zhang Y."/>
            <person name="Higashide W.M."/>
            <person name="McCormick B.A."/>
            <person name="Chen J."/>
            <person name="Zhou D."/>
        </authorList>
    </citation>
    <scope>FUNCTION</scope>
    <scope>UBIQUITIN LIGASE ACTIVITY</scope>
    <scope>UBIQUITINATION</scope>
    <scope>MUTAGENESIS OF CYS-753</scope>
    <source>
        <strain>SL1344</strain>
    </source>
</reference>
<reference key="5">
    <citation type="journal article" date="2008" name="Nat. Struct. Mol. Biol.">
        <title>Crystal structure of SopA, a Salmonella effector protein mimicking a eukaryotic ubiquitin ligase.</title>
        <authorList>
            <person name="Diao J."/>
            <person name="Zhang Y."/>
            <person name="Huibregtse J.M."/>
            <person name="Zhou D."/>
            <person name="Chen J."/>
        </authorList>
    </citation>
    <scope>X-RAY CRYSTALLOGRAPHY (2.1 ANGSTROMS) OF 163-782</scope>
    <scope>FUNCTION AS A LIGASE</scope>
    <scope>DOMAIN</scope>
    <scope>MUTAGENESIS OF LEU-747 AND THR-752</scope>
</reference>
<reference evidence="8" key="6">
    <citation type="journal article" date="2017" name="Nat. Commun.">
        <title>Structural basis for the recognition and degradation of host TRIM proteins by Salmonella effector SopA.</title>
        <authorList>
            <person name="Fiskin E."/>
            <person name="Bhogaraju S."/>
            <person name="Herhaus L."/>
            <person name="Kalayil S."/>
            <person name="Hahn M."/>
            <person name="Dikic I."/>
        </authorList>
    </citation>
    <scope>X-RAY CRYSTALLOGRAPHY (2.85 ANGSTROMS) OF 163-425</scope>
    <scope>FUNCTION</scope>
    <scope>CATALYTIC ACTIVITY</scope>
</reference>
<keyword id="KW-0002">3D-structure</keyword>
<keyword id="KW-1185">Reference proteome</keyword>
<keyword id="KW-0964">Secreted</keyword>
<keyword id="KW-0808">Transferase</keyword>
<keyword id="KW-0832">Ubl conjugation</keyword>
<keyword id="KW-0833">Ubl conjugation pathway</keyword>
<keyword id="KW-0843">Virulence</keyword>
<accession>Q8ZNR3</accession>
<gene>
    <name type="primary">sopA</name>
    <name type="ordered locus">STM2066</name>
</gene>
<sequence>MKISSGAINFSTIPNQVKKLITSIREHTKNGLTSKITSVKNTHTSLNEKFKTGKDSPIEFALPQKIKDFFQPKDKNTLNKTLITVKNIKDTNNAGKKNISAEDVSKMNAAFMRKHIANQTCDYNYRMTGAAPLPGGVSVSANNRPTVSEGRTPPVSPSLSLQATSSPSSPADWAKKLTDAVLRQKAGETLTAADRDFSNADFRNITFSKILPPSFMERDGDIIKGFNFSNSKFTYSDISHLHFDECRFTYSTLSDVVCSNTKFSNSDMNEVFLQYSITTQQQPSFIDTTLKNTLIRHKANLSGVILNEPDNSSPPSVSGGGNFIRLGDIWLQMPLLWTENAVDGFLNHEHNNGKSILMTIDSLPDKYSQEKVQAMEDLVKSLRGGRLTEACIRPVESSLVSVLAHPPYTQSALISEWLGPVQERFFAHQCQTYNDVPLPAPDTYYQQRILPVLLDSFDRNSAAMTTHSGLFNQVILHCMTGVDCTDGTRQKAAALYEQYLAHPAVSPHIHNGLFGNYDGSPDWTTRAADNFLLLSSQDSDTAMMLSTDTLLTMLNPTPDTAWDNFYLLRAGENVSTAQISPVELFRHDFPVFLAAFNQQATQRRFGELIDIILSTEEHGELNQQFLAATNQKHSTVKLIDDASVSRLATIFDPLLPEGKLSPAHYQHILSAYHLTDATPQKQAETLFCLSTAFARYSSSAIFGTEHDSPPALRGYAEALMQKAWELSPAIFPSSEQFTEWSDRFHGLHGAFTCTSVVADSMQRHARKYFPSVLSSILPLAWA</sequence>
<name>SOPA_SALTY</name>
<protein>
    <recommendedName>
        <fullName>E3 ubiquitin-protein ligase SopA</fullName>
        <ecNumber evidence="6">2.3.2.26</ecNumber>
    </recommendedName>
    <alternativeName>
        <fullName evidence="7">HECT-type E3 ubiquitin transferase SopA</fullName>
    </alternativeName>
    <alternativeName>
        <fullName>Salmonella outer protein A</fullName>
    </alternativeName>
    <alternativeName>
        <fullName>Secreted effector protein SopA</fullName>
    </alternativeName>
</protein>